<dbReference type="EC" id="2.5.1.78" evidence="1"/>
<dbReference type="EMBL" id="CP000316">
    <property type="protein sequence ID" value="ABE44801.1"/>
    <property type="molecule type" value="Genomic_DNA"/>
</dbReference>
<dbReference type="RefSeq" id="WP_011483799.1">
    <property type="nucleotide sequence ID" value="NC_007948.1"/>
</dbReference>
<dbReference type="SMR" id="Q129J1"/>
<dbReference type="STRING" id="296591.Bpro_2886"/>
<dbReference type="KEGG" id="pol:Bpro_2886"/>
<dbReference type="eggNOG" id="COG0054">
    <property type="taxonomic scope" value="Bacteria"/>
</dbReference>
<dbReference type="HOGENOM" id="CLU_089358_1_2_4"/>
<dbReference type="OrthoDB" id="9809709at2"/>
<dbReference type="UniPathway" id="UPA00275">
    <property type="reaction ID" value="UER00404"/>
</dbReference>
<dbReference type="Proteomes" id="UP000001983">
    <property type="component" value="Chromosome"/>
</dbReference>
<dbReference type="GO" id="GO:0005829">
    <property type="term" value="C:cytosol"/>
    <property type="evidence" value="ECO:0007669"/>
    <property type="project" value="TreeGrafter"/>
</dbReference>
<dbReference type="GO" id="GO:0009349">
    <property type="term" value="C:riboflavin synthase complex"/>
    <property type="evidence" value="ECO:0007669"/>
    <property type="project" value="InterPro"/>
</dbReference>
<dbReference type="GO" id="GO:0000906">
    <property type="term" value="F:6,7-dimethyl-8-ribityllumazine synthase activity"/>
    <property type="evidence" value="ECO:0007669"/>
    <property type="project" value="UniProtKB-UniRule"/>
</dbReference>
<dbReference type="GO" id="GO:0009231">
    <property type="term" value="P:riboflavin biosynthetic process"/>
    <property type="evidence" value="ECO:0007669"/>
    <property type="project" value="UniProtKB-UniRule"/>
</dbReference>
<dbReference type="CDD" id="cd09209">
    <property type="entry name" value="Lumazine_synthase-I"/>
    <property type="match status" value="1"/>
</dbReference>
<dbReference type="Gene3D" id="3.40.50.960">
    <property type="entry name" value="Lumazine/riboflavin synthase"/>
    <property type="match status" value="1"/>
</dbReference>
<dbReference type="HAMAP" id="MF_00178">
    <property type="entry name" value="Lumazine_synth"/>
    <property type="match status" value="1"/>
</dbReference>
<dbReference type="InterPro" id="IPR034964">
    <property type="entry name" value="LS"/>
</dbReference>
<dbReference type="InterPro" id="IPR002180">
    <property type="entry name" value="LS/RS"/>
</dbReference>
<dbReference type="InterPro" id="IPR036467">
    <property type="entry name" value="LS/RS_sf"/>
</dbReference>
<dbReference type="NCBIfam" id="TIGR00114">
    <property type="entry name" value="lumazine-synth"/>
    <property type="match status" value="1"/>
</dbReference>
<dbReference type="PANTHER" id="PTHR21058:SF0">
    <property type="entry name" value="6,7-DIMETHYL-8-RIBITYLLUMAZINE SYNTHASE"/>
    <property type="match status" value="1"/>
</dbReference>
<dbReference type="PANTHER" id="PTHR21058">
    <property type="entry name" value="6,7-DIMETHYL-8-RIBITYLLUMAZINE SYNTHASE DMRL SYNTHASE LUMAZINE SYNTHASE"/>
    <property type="match status" value="1"/>
</dbReference>
<dbReference type="Pfam" id="PF00885">
    <property type="entry name" value="DMRL_synthase"/>
    <property type="match status" value="1"/>
</dbReference>
<dbReference type="SUPFAM" id="SSF52121">
    <property type="entry name" value="Lumazine synthase"/>
    <property type="match status" value="1"/>
</dbReference>
<evidence type="ECO:0000255" key="1">
    <source>
        <dbReference type="HAMAP-Rule" id="MF_00178"/>
    </source>
</evidence>
<comment type="function">
    <text evidence="1">Catalyzes the formation of 6,7-dimethyl-8-ribityllumazine by condensation of 5-amino-6-(D-ribitylamino)uracil with 3,4-dihydroxy-2-butanone 4-phosphate. This is the penultimate step in the biosynthesis of riboflavin.</text>
</comment>
<comment type="catalytic activity">
    <reaction evidence="1">
        <text>(2S)-2-hydroxy-3-oxobutyl phosphate + 5-amino-6-(D-ribitylamino)uracil = 6,7-dimethyl-8-(1-D-ribityl)lumazine + phosphate + 2 H2O + H(+)</text>
        <dbReference type="Rhea" id="RHEA:26152"/>
        <dbReference type="ChEBI" id="CHEBI:15377"/>
        <dbReference type="ChEBI" id="CHEBI:15378"/>
        <dbReference type="ChEBI" id="CHEBI:15934"/>
        <dbReference type="ChEBI" id="CHEBI:43474"/>
        <dbReference type="ChEBI" id="CHEBI:58201"/>
        <dbReference type="ChEBI" id="CHEBI:58830"/>
        <dbReference type="EC" id="2.5.1.78"/>
    </reaction>
</comment>
<comment type="pathway">
    <text evidence="1">Cofactor biosynthesis; riboflavin biosynthesis; riboflavin from 2-hydroxy-3-oxobutyl phosphate and 5-amino-6-(D-ribitylamino)uracil: step 1/2.</text>
</comment>
<comment type="similarity">
    <text evidence="1">Belongs to the DMRL synthase family.</text>
</comment>
<gene>
    <name evidence="1" type="primary">ribH</name>
    <name type="ordered locus">Bpro_2886</name>
</gene>
<protein>
    <recommendedName>
        <fullName evidence="1">6,7-dimethyl-8-ribityllumazine synthase</fullName>
        <shortName evidence="1">DMRL synthase</shortName>
        <shortName evidence="1">LS</shortName>
        <shortName evidence="1">Lumazine synthase</shortName>
        <ecNumber evidence="1">2.5.1.78</ecNumber>
    </recommendedName>
</protein>
<proteinExistence type="inferred from homology"/>
<feature type="chain" id="PRO_1000040477" description="6,7-dimethyl-8-ribityllumazine synthase">
    <location>
        <begin position="1"/>
        <end position="154"/>
    </location>
</feature>
<feature type="active site" description="Proton donor" evidence="1">
    <location>
        <position position="92"/>
    </location>
</feature>
<feature type="binding site" evidence="1">
    <location>
        <position position="26"/>
    </location>
    <ligand>
        <name>5-amino-6-(D-ribitylamino)uracil</name>
        <dbReference type="ChEBI" id="CHEBI:15934"/>
    </ligand>
</feature>
<feature type="binding site" evidence="1">
    <location>
        <begin position="60"/>
        <end position="62"/>
    </location>
    <ligand>
        <name>5-amino-6-(D-ribitylamino)uracil</name>
        <dbReference type="ChEBI" id="CHEBI:15934"/>
    </ligand>
</feature>
<feature type="binding site" evidence="1">
    <location>
        <begin position="84"/>
        <end position="86"/>
    </location>
    <ligand>
        <name>5-amino-6-(D-ribitylamino)uracil</name>
        <dbReference type="ChEBI" id="CHEBI:15934"/>
    </ligand>
</feature>
<feature type="binding site" evidence="1">
    <location>
        <begin position="89"/>
        <end position="90"/>
    </location>
    <ligand>
        <name>(2S)-2-hydroxy-3-oxobutyl phosphate</name>
        <dbReference type="ChEBI" id="CHEBI:58830"/>
    </ligand>
</feature>
<feature type="binding site" evidence="1">
    <location>
        <position position="117"/>
    </location>
    <ligand>
        <name>5-amino-6-(D-ribitylamino)uracil</name>
        <dbReference type="ChEBI" id="CHEBI:15934"/>
    </ligand>
</feature>
<feature type="binding site" evidence="1">
    <location>
        <position position="131"/>
    </location>
    <ligand>
        <name>(2S)-2-hydroxy-3-oxobutyl phosphate</name>
        <dbReference type="ChEBI" id="CHEBI:58830"/>
    </ligand>
</feature>
<keyword id="KW-1185">Reference proteome</keyword>
<keyword id="KW-0686">Riboflavin biosynthesis</keyword>
<keyword id="KW-0808">Transferase</keyword>
<accession>Q129J1</accession>
<organism>
    <name type="scientific">Polaromonas sp. (strain JS666 / ATCC BAA-500)</name>
    <dbReference type="NCBI Taxonomy" id="296591"/>
    <lineage>
        <taxon>Bacteria</taxon>
        <taxon>Pseudomonadati</taxon>
        <taxon>Pseudomonadota</taxon>
        <taxon>Betaproteobacteria</taxon>
        <taxon>Burkholderiales</taxon>
        <taxon>Comamonadaceae</taxon>
        <taxon>Polaromonas</taxon>
    </lineage>
</organism>
<sequence length="154" mass="16532">MFGAEKGSTDKLDGRKFSIGIVQARFNESVTNALAEACKQELAALGVEEKNIKHVKVPGALEVPCALQAMAESDKYDALIALGCIIRGETYHFELVANESGSAVTRLALDYQLPIANAILTTENLAQAEARQIEKGRDAARVAVEMANLLDELA</sequence>
<name>RISB_POLSJ</name>
<reference key="1">
    <citation type="journal article" date="2008" name="Appl. Environ. Microbiol.">
        <title>The genome of Polaromonas sp. strain JS666: insights into the evolution of a hydrocarbon- and xenobiotic-degrading bacterium, and features of relevance to biotechnology.</title>
        <authorList>
            <person name="Mattes T.E."/>
            <person name="Alexander A.K."/>
            <person name="Richardson P.M."/>
            <person name="Munk A.C."/>
            <person name="Han C.S."/>
            <person name="Stothard P."/>
            <person name="Coleman N.V."/>
        </authorList>
    </citation>
    <scope>NUCLEOTIDE SEQUENCE [LARGE SCALE GENOMIC DNA]</scope>
    <source>
        <strain>JS666 / ATCC BAA-500</strain>
    </source>
</reference>